<dbReference type="EC" id="6.3.5.2" evidence="1"/>
<dbReference type="EMBL" id="AM040265">
    <property type="protein sequence ID" value="CAJ13008.1"/>
    <property type="molecule type" value="Genomic_DNA"/>
</dbReference>
<dbReference type="RefSeq" id="WP_002966228.1">
    <property type="nucleotide sequence ID" value="NZ_KN046823.1"/>
</dbReference>
<dbReference type="SMR" id="Q2YK38"/>
<dbReference type="STRING" id="359391.BAB2_0842"/>
<dbReference type="GeneID" id="97535486"/>
<dbReference type="KEGG" id="bmf:BAB2_0842"/>
<dbReference type="PATRIC" id="fig|359391.11.peg.533"/>
<dbReference type="HOGENOM" id="CLU_014340_0_5_5"/>
<dbReference type="PhylomeDB" id="Q2YK38"/>
<dbReference type="UniPathway" id="UPA00189">
    <property type="reaction ID" value="UER00296"/>
</dbReference>
<dbReference type="Proteomes" id="UP000002719">
    <property type="component" value="Chromosome II"/>
</dbReference>
<dbReference type="GO" id="GO:0005829">
    <property type="term" value="C:cytosol"/>
    <property type="evidence" value="ECO:0007669"/>
    <property type="project" value="TreeGrafter"/>
</dbReference>
<dbReference type="GO" id="GO:0005524">
    <property type="term" value="F:ATP binding"/>
    <property type="evidence" value="ECO:0007669"/>
    <property type="project" value="UniProtKB-UniRule"/>
</dbReference>
<dbReference type="GO" id="GO:0003921">
    <property type="term" value="F:GMP synthase activity"/>
    <property type="evidence" value="ECO:0007669"/>
    <property type="project" value="InterPro"/>
</dbReference>
<dbReference type="CDD" id="cd01742">
    <property type="entry name" value="GATase1_GMP_Synthase"/>
    <property type="match status" value="1"/>
</dbReference>
<dbReference type="CDD" id="cd01997">
    <property type="entry name" value="GMP_synthase_C"/>
    <property type="match status" value="1"/>
</dbReference>
<dbReference type="FunFam" id="3.30.300.10:FF:000002">
    <property type="entry name" value="GMP synthase [glutamine-hydrolyzing]"/>
    <property type="match status" value="1"/>
</dbReference>
<dbReference type="FunFam" id="3.40.50.620:FF:000001">
    <property type="entry name" value="GMP synthase [glutamine-hydrolyzing]"/>
    <property type="match status" value="1"/>
</dbReference>
<dbReference type="FunFam" id="3.40.50.880:FF:000001">
    <property type="entry name" value="GMP synthase [glutamine-hydrolyzing]"/>
    <property type="match status" value="1"/>
</dbReference>
<dbReference type="Gene3D" id="3.30.300.10">
    <property type="match status" value="1"/>
</dbReference>
<dbReference type="Gene3D" id="3.40.50.880">
    <property type="match status" value="1"/>
</dbReference>
<dbReference type="Gene3D" id="3.40.50.620">
    <property type="entry name" value="HUPs"/>
    <property type="match status" value="1"/>
</dbReference>
<dbReference type="HAMAP" id="MF_00344">
    <property type="entry name" value="GMP_synthase"/>
    <property type="match status" value="1"/>
</dbReference>
<dbReference type="InterPro" id="IPR029062">
    <property type="entry name" value="Class_I_gatase-like"/>
</dbReference>
<dbReference type="InterPro" id="IPR017926">
    <property type="entry name" value="GATASE"/>
</dbReference>
<dbReference type="InterPro" id="IPR001674">
    <property type="entry name" value="GMP_synth_C"/>
</dbReference>
<dbReference type="InterPro" id="IPR004739">
    <property type="entry name" value="GMP_synth_GATase"/>
</dbReference>
<dbReference type="InterPro" id="IPR022955">
    <property type="entry name" value="GMP_synthase"/>
</dbReference>
<dbReference type="InterPro" id="IPR025777">
    <property type="entry name" value="GMPS_ATP_PPase_dom"/>
</dbReference>
<dbReference type="InterPro" id="IPR022310">
    <property type="entry name" value="NAD/GMP_synthase"/>
</dbReference>
<dbReference type="InterPro" id="IPR014729">
    <property type="entry name" value="Rossmann-like_a/b/a_fold"/>
</dbReference>
<dbReference type="NCBIfam" id="TIGR00884">
    <property type="entry name" value="guaA_Cterm"/>
    <property type="match status" value="1"/>
</dbReference>
<dbReference type="NCBIfam" id="TIGR00888">
    <property type="entry name" value="guaA_Nterm"/>
    <property type="match status" value="1"/>
</dbReference>
<dbReference type="NCBIfam" id="NF000848">
    <property type="entry name" value="PRK00074.1"/>
    <property type="match status" value="1"/>
</dbReference>
<dbReference type="PANTHER" id="PTHR11922:SF2">
    <property type="entry name" value="GMP SYNTHASE [GLUTAMINE-HYDROLYZING]"/>
    <property type="match status" value="1"/>
</dbReference>
<dbReference type="PANTHER" id="PTHR11922">
    <property type="entry name" value="GMP SYNTHASE-RELATED"/>
    <property type="match status" value="1"/>
</dbReference>
<dbReference type="Pfam" id="PF00117">
    <property type="entry name" value="GATase"/>
    <property type="match status" value="1"/>
</dbReference>
<dbReference type="Pfam" id="PF00958">
    <property type="entry name" value="GMP_synt_C"/>
    <property type="match status" value="1"/>
</dbReference>
<dbReference type="Pfam" id="PF02540">
    <property type="entry name" value="NAD_synthase"/>
    <property type="match status" value="1"/>
</dbReference>
<dbReference type="PRINTS" id="PR00097">
    <property type="entry name" value="ANTSNTHASEII"/>
</dbReference>
<dbReference type="PRINTS" id="PR00096">
    <property type="entry name" value="GATASE"/>
</dbReference>
<dbReference type="SUPFAM" id="SSF52402">
    <property type="entry name" value="Adenine nucleotide alpha hydrolases-like"/>
    <property type="match status" value="1"/>
</dbReference>
<dbReference type="SUPFAM" id="SSF52317">
    <property type="entry name" value="Class I glutamine amidotransferase-like"/>
    <property type="match status" value="1"/>
</dbReference>
<dbReference type="SUPFAM" id="SSF54810">
    <property type="entry name" value="GMP synthetase C-terminal dimerisation domain"/>
    <property type="match status" value="1"/>
</dbReference>
<dbReference type="PROSITE" id="PS51273">
    <property type="entry name" value="GATASE_TYPE_1"/>
    <property type="match status" value="1"/>
</dbReference>
<dbReference type="PROSITE" id="PS51553">
    <property type="entry name" value="GMPS_ATP_PPASE"/>
    <property type="match status" value="1"/>
</dbReference>
<comment type="function">
    <text evidence="1">Catalyzes the synthesis of GMP from XMP.</text>
</comment>
<comment type="catalytic activity">
    <reaction evidence="1">
        <text>XMP + L-glutamine + ATP + H2O = GMP + L-glutamate + AMP + diphosphate + 2 H(+)</text>
        <dbReference type="Rhea" id="RHEA:11680"/>
        <dbReference type="ChEBI" id="CHEBI:15377"/>
        <dbReference type="ChEBI" id="CHEBI:15378"/>
        <dbReference type="ChEBI" id="CHEBI:29985"/>
        <dbReference type="ChEBI" id="CHEBI:30616"/>
        <dbReference type="ChEBI" id="CHEBI:33019"/>
        <dbReference type="ChEBI" id="CHEBI:57464"/>
        <dbReference type="ChEBI" id="CHEBI:58115"/>
        <dbReference type="ChEBI" id="CHEBI:58359"/>
        <dbReference type="ChEBI" id="CHEBI:456215"/>
        <dbReference type="EC" id="6.3.5.2"/>
    </reaction>
</comment>
<comment type="pathway">
    <text evidence="1">Purine metabolism; GMP biosynthesis; GMP from XMP (L-Gln route): step 1/1.</text>
</comment>
<comment type="subunit">
    <text evidence="1">Homodimer.</text>
</comment>
<evidence type="ECO:0000255" key="1">
    <source>
        <dbReference type="HAMAP-Rule" id="MF_00344"/>
    </source>
</evidence>
<sequence length="520" mass="57141">MSTTAYPDTILIIDFGSQVTQLIARRVREANVYCEIVPFQSADEAFKRLQPKGVILSGSPHSTTDIGSPRAPQAIFDAGIPVLGICYGEQTMCAQLGGNVESGHDREFGRAFLDVQEDSPLFAGIWAKGTRHQVWMSHGDRVTSLPDGFTIIGTSPNAPYAVIADEKRKYYGVQFHPEVVHTPDGAKLLQNFVHRIVGVKPGWTMGAYREQAVEAIRKQVGSGKVICALSGGVDSSVAALLAHEAVGDQLTCILVDHGLMRKDEAQQVVEMFREHYNLPLILVDASDRFIGALEGESDPEKKRKTIGRLFIEVFEEEARKLGGADFLVQGTLYPDVIESVSFTGGPSVTIKSHHNVGGLPERMKMQLVEPLRELFKDEVRLLGKELGLPDSFIGRHPFPGPGLAIRCPGGVTREKLEILREADAIYLDEIRKAGLYDAIWQAFAVLLPVQTVGVMGDGRTYEFVCALRAVTSVDGMTADFYHYDMNFLGNAATRIINEVRGINRVVYDVTSKPPGTIEWE</sequence>
<gene>
    <name evidence="1" type="primary">guaA</name>
    <name type="ordered locus">BAB2_0842</name>
</gene>
<reference key="1">
    <citation type="journal article" date="2005" name="Infect. Immun.">
        <title>Whole-genome analyses of speciation events in pathogenic Brucellae.</title>
        <authorList>
            <person name="Chain P.S."/>
            <person name="Comerci D.J."/>
            <person name="Tolmasky M.E."/>
            <person name="Larimer F.W."/>
            <person name="Malfatti S.A."/>
            <person name="Vergez L.M."/>
            <person name="Aguero F."/>
            <person name="Land M.L."/>
            <person name="Ugalde R.A."/>
            <person name="Garcia E."/>
        </authorList>
    </citation>
    <scope>NUCLEOTIDE SEQUENCE [LARGE SCALE GENOMIC DNA]</scope>
    <source>
        <strain>2308</strain>
    </source>
</reference>
<protein>
    <recommendedName>
        <fullName evidence="1">GMP synthase [glutamine-hydrolyzing]</fullName>
        <ecNumber evidence="1">6.3.5.2</ecNumber>
    </recommendedName>
    <alternativeName>
        <fullName evidence="1">GMP synthetase</fullName>
    </alternativeName>
    <alternativeName>
        <fullName evidence="1">Glutamine amidotransferase</fullName>
    </alternativeName>
</protein>
<keyword id="KW-0067">ATP-binding</keyword>
<keyword id="KW-0315">Glutamine amidotransferase</keyword>
<keyword id="KW-0332">GMP biosynthesis</keyword>
<keyword id="KW-0436">Ligase</keyword>
<keyword id="KW-0547">Nucleotide-binding</keyword>
<keyword id="KW-0658">Purine biosynthesis</keyword>
<keyword id="KW-1185">Reference proteome</keyword>
<name>GUAA_BRUA2</name>
<organism>
    <name type="scientific">Brucella abortus (strain 2308)</name>
    <dbReference type="NCBI Taxonomy" id="359391"/>
    <lineage>
        <taxon>Bacteria</taxon>
        <taxon>Pseudomonadati</taxon>
        <taxon>Pseudomonadota</taxon>
        <taxon>Alphaproteobacteria</taxon>
        <taxon>Hyphomicrobiales</taxon>
        <taxon>Brucellaceae</taxon>
        <taxon>Brucella/Ochrobactrum group</taxon>
        <taxon>Brucella</taxon>
    </lineage>
</organism>
<proteinExistence type="inferred from homology"/>
<feature type="chain" id="PRO_0000229410" description="GMP synthase [glutamine-hydrolyzing]">
    <location>
        <begin position="1"/>
        <end position="520"/>
    </location>
</feature>
<feature type="domain" description="Glutamine amidotransferase type-1" evidence="1">
    <location>
        <begin position="9"/>
        <end position="202"/>
    </location>
</feature>
<feature type="domain" description="GMPS ATP-PPase" evidence="1">
    <location>
        <begin position="203"/>
        <end position="395"/>
    </location>
</feature>
<feature type="active site" description="Nucleophile" evidence="1">
    <location>
        <position position="86"/>
    </location>
</feature>
<feature type="active site" evidence="1">
    <location>
        <position position="176"/>
    </location>
</feature>
<feature type="active site" evidence="1">
    <location>
        <position position="178"/>
    </location>
</feature>
<feature type="binding site" evidence="1">
    <location>
        <begin position="230"/>
        <end position="236"/>
    </location>
    <ligand>
        <name>ATP</name>
        <dbReference type="ChEBI" id="CHEBI:30616"/>
    </ligand>
</feature>
<accession>Q2YK38</accession>